<accession>P58308</accession>
<accession>Q5SGC8</accession>
<accession>Q6VLX3</accession>
<accession>Q8BG12</accession>
<sequence>MSSTKLEDSLSRRNWSSASELNETQEPFLNPTDYDDEEFLRYLWREYLHPKEYEWVLIAGYIIVFVVALIGNVLVCVAVWKNHHMRTVTNYFIVNLSLADVLVTITCLPATLVVDITETWFFGQSLCKVIPYLQTVSVSVSVLTLSCIALDRWYAICHPLMFKSTAKRARNSIVVIWIVSCIIMIPQAIVMECSSMLPGLANKTTLFTVCDEHWGGEVYPKMYHICFFLVTYMAPLCLMILAYLQIFRKLWCRQIPGTSSVVQRKWKQQQPVSQPRGSGQQSKARISAVAAEIKQIRARRKTARMLMVVLLVFAICYLPISILNVLKRVFGMFTHTEDRETVYAWFTFSHWLVYANSAANPIIYNFLSGKFREEFKAAFSCCLGVHHRQGDRLARGRTSTESRKSLTTQISNFDNVSKLSEHVVLTSISTLPAANGAGPLQNWYLQQGVPSSLLSTWLEV</sequence>
<dbReference type="EMBL" id="AY336084">
    <property type="protein sequence ID" value="AAR01327.1"/>
    <property type="molecule type" value="mRNA"/>
</dbReference>
<dbReference type="EMBL" id="AY336085">
    <property type="protein sequence ID" value="AAR01328.1"/>
    <property type="molecule type" value="mRNA"/>
</dbReference>
<dbReference type="EMBL" id="AY339390">
    <property type="protein sequence ID" value="AAR11293.1"/>
    <property type="molecule type" value="Genomic_DNA"/>
</dbReference>
<dbReference type="EMBL" id="AY339383">
    <property type="protein sequence ID" value="AAR11293.1"/>
    <property type="status" value="JOINED"/>
    <property type="molecule type" value="Genomic_DNA"/>
</dbReference>
<dbReference type="EMBL" id="AY339384">
    <property type="protein sequence ID" value="AAR11293.1"/>
    <property type="status" value="JOINED"/>
    <property type="molecule type" value="Genomic_DNA"/>
</dbReference>
<dbReference type="EMBL" id="AY339385">
    <property type="protein sequence ID" value="AAR11293.1"/>
    <property type="status" value="JOINED"/>
    <property type="molecule type" value="Genomic_DNA"/>
</dbReference>
<dbReference type="EMBL" id="AY339386">
    <property type="protein sequence ID" value="AAR11293.1"/>
    <property type="status" value="JOINED"/>
    <property type="molecule type" value="Genomic_DNA"/>
</dbReference>
<dbReference type="EMBL" id="AY339387">
    <property type="protein sequence ID" value="AAR11293.1"/>
    <property type="status" value="JOINED"/>
    <property type="molecule type" value="Genomic_DNA"/>
</dbReference>
<dbReference type="EMBL" id="AY339388">
    <property type="protein sequence ID" value="AAR11293.1"/>
    <property type="status" value="JOINED"/>
    <property type="molecule type" value="Genomic_DNA"/>
</dbReference>
<dbReference type="EMBL" id="AY339389">
    <property type="protein sequence ID" value="AAR11293.1"/>
    <property type="status" value="JOINED"/>
    <property type="molecule type" value="Genomic_DNA"/>
</dbReference>
<dbReference type="EMBL" id="AY339389">
    <property type="protein sequence ID" value="AAR11294.1"/>
    <property type="molecule type" value="Genomic_DNA"/>
</dbReference>
<dbReference type="EMBL" id="AY339383">
    <property type="protein sequence ID" value="AAR11294.1"/>
    <property type="status" value="JOINED"/>
    <property type="molecule type" value="Genomic_DNA"/>
</dbReference>
<dbReference type="EMBL" id="AY339384">
    <property type="protein sequence ID" value="AAR11294.1"/>
    <property type="status" value="JOINED"/>
    <property type="molecule type" value="Genomic_DNA"/>
</dbReference>
<dbReference type="EMBL" id="AY339385">
    <property type="protein sequence ID" value="AAR11294.1"/>
    <property type="status" value="JOINED"/>
    <property type="molecule type" value="Genomic_DNA"/>
</dbReference>
<dbReference type="EMBL" id="AY339386">
    <property type="protein sequence ID" value="AAR11294.1"/>
    <property type="status" value="JOINED"/>
    <property type="molecule type" value="Genomic_DNA"/>
</dbReference>
<dbReference type="EMBL" id="AY339387">
    <property type="protein sequence ID" value="AAR11294.1"/>
    <property type="status" value="JOINED"/>
    <property type="molecule type" value="Genomic_DNA"/>
</dbReference>
<dbReference type="EMBL" id="AY339388">
    <property type="protein sequence ID" value="AAR11294.1"/>
    <property type="status" value="JOINED"/>
    <property type="molecule type" value="Genomic_DNA"/>
</dbReference>
<dbReference type="EMBL" id="AK038551">
    <property type="protein sequence ID" value="BAC30039.1"/>
    <property type="molecule type" value="mRNA"/>
</dbReference>
<dbReference type="EMBL" id="AK048781">
    <property type="protein sequence ID" value="BAC33457.1"/>
    <property type="molecule type" value="mRNA"/>
</dbReference>
<dbReference type="EMBL" id="AF394597">
    <property type="protein sequence ID" value="AAK71327.1"/>
    <property type="molecule type" value="mRNA"/>
</dbReference>
<dbReference type="CCDS" id="CCDS23350.1">
    <molecule id="P58308-1"/>
</dbReference>
<dbReference type="CCDS" id="CCDS90628.1">
    <molecule id="P58308-2"/>
</dbReference>
<dbReference type="RefSeq" id="NP_001351480.1">
    <molecule id="P58308-2"/>
    <property type="nucleotide sequence ID" value="NM_001364551.1"/>
</dbReference>
<dbReference type="RefSeq" id="NP_945200.1">
    <molecule id="P58308-1"/>
    <property type="nucleotide sequence ID" value="NM_198962.4"/>
</dbReference>
<dbReference type="SMR" id="P58308"/>
<dbReference type="BioGRID" id="239880">
    <property type="interactions" value="1"/>
</dbReference>
<dbReference type="FunCoup" id="P58308">
    <property type="interactions" value="1043"/>
</dbReference>
<dbReference type="STRING" id="10090.ENSMUSP00000058230"/>
<dbReference type="BindingDB" id="P58308"/>
<dbReference type="ChEMBL" id="CHEMBL2434818"/>
<dbReference type="DrugCentral" id="P58308"/>
<dbReference type="GuidetoPHARMACOLOGY" id="322"/>
<dbReference type="GlyCosmos" id="P58308">
    <property type="glycosylation" value="3 sites, No reported glycans"/>
</dbReference>
<dbReference type="GlyGen" id="P58308">
    <property type="glycosylation" value="3 sites"/>
</dbReference>
<dbReference type="PhosphoSitePlus" id="P58308"/>
<dbReference type="SwissPalm" id="P58308"/>
<dbReference type="PaxDb" id="10090-ENSMUSP00000058230"/>
<dbReference type="ProteomicsDB" id="294353">
    <molecule id="P58308-1"/>
</dbReference>
<dbReference type="ProteomicsDB" id="294354">
    <molecule id="P58308-2"/>
</dbReference>
<dbReference type="Antibodypedia" id="17332">
    <property type="antibodies" value="368 antibodies from 37 providers"/>
</dbReference>
<dbReference type="DNASU" id="387285"/>
<dbReference type="Ensembl" id="ENSMUST00000063140.15">
    <molecule id="P58308-1"/>
    <property type="protein sequence ID" value="ENSMUSP00000058230.8"/>
    <property type="gene ID" value="ENSMUSG00000032360.17"/>
</dbReference>
<dbReference type="Ensembl" id="ENSMUST00000184757.2">
    <molecule id="P58308-2"/>
    <property type="protein sequence ID" value="ENSMUSP00000139377.2"/>
    <property type="gene ID" value="ENSMUSG00000032360.17"/>
</dbReference>
<dbReference type="GeneID" id="387285"/>
<dbReference type="KEGG" id="mmu:387285"/>
<dbReference type="UCSC" id="uc009qsz.1">
    <molecule id="P58308-1"/>
    <property type="organism name" value="mouse"/>
</dbReference>
<dbReference type="AGR" id="MGI:2680765"/>
<dbReference type="CTD" id="3062"/>
<dbReference type="MGI" id="MGI:2680765">
    <property type="gene designation" value="Hcrtr2"/>
</dbReference>
<dbReference type="VEuPathDB" id="HostDB:ENSMUSG00000032360"/>
<dbReference type="eggNOG" id="KOG3656">
    <property type="taxonomic scope" value="Eukaryota"/>
</dbReference>
<dbReference type="GeneTree" id="ENSGT01130000278294"/>
<dbReference type="HOGENOM" id="CLU_009579_6_3_1"/>
<dbReference type="InParanoid" id="P58308"/>
<dbReference type="OMA" id="LHIPGMN"/>
<dbReference type="OrthoDB" id="9986530at2759"/>
<dbReference type="PhylomeDB" id="P58308"/>
<dbReference type="TreeFam" id="TF315303"/>
<dbReference type="Reactome" id="R-MMU-389397">
    <property type="pathway name" value="Orexin and neuropeptides FF and QRFP bind to their respective receptors"/>
</dbReference>
<dbReference type="Reactome" id="R-MMU-416476">
    <property type="pathway name" value="G alpha (q) signalling events"/>
</dbReference>
<dbReference type="BioGRID-ORCS" id="387285">
    <property type="hits" value="2 hits in 63 CRISPR screens"/>
</dbReference>
<dbReference type="ChiTaRS" id="Hcrtr2">
    <property type="organism name" value="mouse"/>
</dbReference>
<dbReference type="PRO" id="PR:P58308"/>
<dbReference type="Proteomes" id="UP000000589">
    <property type="component" value="Chromosome 9"/>
</dbReference>
<dbReference type="RNAct" id="P58308">
    <property type="molecule type" value="protein"/>
</dbReference>
<dbReference type="Bgee" id="ENSMUSG00000032360">
    <property type="expression patterns" value="Expressed in blastoderm cell in morula and 16 other cell types or tissues"/>
</dbReference>
<dbReference type="GO" id="GO:0005654">
    <property type="term" value="C:nucleoplasm"/>
    <property type="evidence" value="ECO:0007669"/>
    <property type="project" value="Ensembl"/>
</dbReference>
<dbReference type="GO" id="GO:0005886">
    <property type="term" value="C:plasma membrane"/>
    <property type="evidence" value="ECO:0000250"/>
    <property type="project" value="UniProtKB"/>
</dbReference>
<dbReference type="GO" id="GO:0016499">
    <property type="term" value="F:orexin receptor activity"/>
    <property type="evidence" value="ECO:0000314"/>
    <property type="project" value="MGI"/>
</dbReference>
<dbReference type="GO" id="GO:0017046">
    <property type="term" value="F:peptide hormone binding"/>
    <property type="evidence" value="ECO:0007669"/>
    <property type="project" value="Ensembl"/>
</dbReference>
<dbReference type="GO" id="GO:0022410">
    <property type="term" value="P:circadian sleep/wake cycle process"/>
    <property type="evidence" value="ECO:0007669"/>
    <property type="project" value="InterPro"/>
</dbReference>
<dbReference type="GO" id="GO:0007631">
    <property type="term" value="P:feeding behavior"/>
    <property type="evidence" value="ECO:0007669"/>
    <property type="project" value="Ensembl"/>
</dbReference>
<dbReference type="GO" id="GO:0040011">
    <property type="term" value="P:locomotion"/>
    <property type="evidence" value="ECO:0000316"/>
    <property type="project" value="UniProtKB"/>
</dbReference>
<dbReference type="GO" id="GO:0007218">
    <property type="term" value="P:neuropeptide signaling pathway"/>
    <property type="evidence" value="ECO:0000250"/>
    <property type="project" value="UniProtKB"/>
</dbReference>
<dbReference type="GO" id="GO:0007200">
    <property type="term" value="P:phospholipase C-activating G protein-coupled receptor signaling pathway"/>
    <property type="evidence" value="ECO:0000314"/>
    <property type="project" value="MGI"/>
</dbReference>
<dbReference type="GO" id="GO:0010840">
    <property type="term" value="P:regulation of circadian sleep/wake cycle, wakefulness"/>
    <property type="evidence" value="ECO:0000250"/>
    <property type="project" value="UniProtKB"/>
</dbReference>
<dbReference type="GO" id="GO:0051480">
    <property type="term" value="P:regulation of cytosolic calcium ion concentration"/>
    <property type="evidence" value="ECO:0000250"/>
    <property type="project" value="UniProtKB"/>
</dbReference>
<dbReference type="CDD" id="cd15208">
    <property type="entry name" value="7tmA_OXR"/>
    <property type="match status" value="1"/>
</dbReference>
<dbReference type="FunFam" id="1.20.1070.10:FF:000075">
    <property type="entry name" value="orexin receptor type 2"/>
    <property type="match status" value="1"/>
</dbReference>
<dbReference type="Gene3D" id="1.20.1070.10">
    <property type="entry name" value="Rhodopsin 7-helix transmembrane proteins"/>
    <property type="match status" value="1"/>
</dbReference>
<dbReference type="InterPro" id="IPR000276">
    <property type="entry name" value="GPCR_Rhodpsn"/>
</dbReference>
<dbReference type="InterPro" id="IPR017452">
    <property type="entry name" value="GPCR_Rhodpsn_7TM"/>
</dbReference>
<dbReference type="InterPro" id="IPR000204">
    <property type="entry name" value="Orexin_rcpt"/>
</dbReference>
<dbReference type="InterPro" id="IPR004060">
    <property type="entry name" value="Orexin_rcpt_2"/>
</dbReference>
<dbReference type="PANTHER" id="PTHR45695:SF32">
    <property type="entry name" value="G PROTEIN-COUPLED RECEPTOR 15-LIKE"/>
    <property type="match status" value="1"/>
</dbReference>
<dbReference type="PANTHER" id="PTHR45695">
    <property type="entry name" value="LEUCOKININ RECEPTOR-RELATED"/>
    <property type="match status" value="1"/>
</dbReference>
<dbReference type="Pfam" id="PF00001">
    <property type="entry name" value="7tm_1"/>
    <property type="match status" value="1"/>
</dbReference>
<dbReference type="Pfam" id="PF03827">
    <property type="entry name" value="Orexin_rec2"/>
    <property type="match status" value="1"/>
</dbReference>
<dbReference type="PRINTS" id="PR00237">
    <property type="entry name" value="GPCRRHODOPSN"/>
</dbReference>
<dbReference type="PRINTS" id="PR01522">
    <property type="entry name" value="OREXIN2R"/>
</dbReference>
<dbReference type="PRINTS" id="PR01064">
    <property type="entry name" value="OREXINR"/>
</dbReference>
<dbReference type="SMART" id="SM01381">
    <property type="entry name" value="7TM_GPCR_Srsx"/>
    <property type="match status" value="1"/>
</dbReference>
<dbReference type="SUPFAM" id="SSF81321">
    <property type="entry name" value="Family A G protein-coupled receptor-like"/>
    <property type="match status" value="1"/>
</dbReference>
<dbReference type="PROSITE" id="PS00237">
    <property type="entry name" value="G_PROTEIN_RECEP_F1_1"/>
    <property type="match status" value="1"/>
</dbReference>
<dbReference type="PROSITE" id="PS50262">
    <property type="entry name" value="G_PROTEIN_RECEP_F1_2"/>
    <property type="match status" value="1"/>
</dbReference>
<keyword id="KW-0025">Alternative splicing</keyword>
<keyword id="KW-1003">Cell membrane</keyword>
<keyword id="KW-1015">Disulfide bond</keyword>
<keyword id="KW-0297">G-protein coupled receptor</keyword>
<keyword id="KW-0325">Glycoprotein</keyword>
<keyword id="KW-0472">Membrane</keyword>
<keyword id="KW-0675">Receptor</keyword>
<keyword id="KW-1185">Reference proteome</keyword>
<keyword id="KW-0807">Transducer</keyword>
<keyword id="KW-0812">Transmembrane</keyword>
<keyword id="KW-1133">Transmembrane helix</keyword>
<gene>
    <name type="primary">Hcrtr2</name>
    <name type="synonym">Mox2r</name>
</gene>
<comment type="function">
    <text evidence="1">Nonselective, high-affinity receptor for both orexin-A and orexin-B neuropeptides. Triggers an increase in cytoplasmic Ca(2+) levels in response to orexin-A binding.</text>
</comment>
<comment type="subcellular location">
    <subcellularLocation>
        <location evidence="1">Cell membrane</location>
        <topology evidence="1">Multi-pass membrane protein</topology>
    </subcellularLocation>
</comment>
<comment type="alternative products">
    <event type="alternative splicing"/>
    <isoform>
        <id>P58308-1</id>
        <name>1</name>
        <name>2b</name>
        <sequence type="displayed"/>
    </isoform>
    <isoform>
        <id>P58308-2</id>
        <name>2</name>
        <name>2a</name>
        <sequence type="described" ref="VSP_016466"/>
    </isoform>
</comment>
<comment type="tissue specificity">
    <text evidence="4">Widely expressed. Isoform 2 not detected in skeletal muscle and kidney.</text>
</comment>
<comment type="domain">
    <text evidence="1">The N-terminal region is required for orexin signaling.</text>
</comment>
<comment type="similarity">
    <text evidence="3">Belongs to the G-protein coupled receptor 1 family.</text>
</comment>
<protein>
    <recommendedName>
        <fullName>Orexin receptor type 2</fullName>
        <shortName>Ox-2-R</shortName>
        <shortName>Ox2-R</shortName>
        <shortName>Ox2R</shortName>
    </recommendedName>
    <alternativeName>
        <fullName>Hypocretin receptor type 2</fullName>
    </alternativeName>
</protein>
<organism>
    <name type="scientific">Mus musculus</name>
    <name type="common">Mouse</name>
    <dbReference type="NCBI Taxonomy" id="10090"/>
    <lineage>
        <taxon>Eukaryota</taxon>
        <taxon>Metazoa</taxon>
        <taxon>Chordata</taxon>
        <taxon>Craniata</taxon>
        <taxon>Vertebrata</taxon>
        <taxon>Euteleostomi</taxon>
        <taxon>Mammalia</taxon>
        <taxon>Eutheria</taxon>
        <taxon>Euarchontoglires</taxon>
        <taxon>Glires</taxon>
        <taxon>Rodentia</taxon>
        <taxon>Myomorpha</taxon>
        <taxon>Muroidea</taxon>
        <taxon>Muridae</taxon>
        <taxon>Murinae</taxon>
        <taxon>Mus</taxon>
        <taxon>Mus</taxon>
    </lineage>
</organism>
<reference key="1">
    <citation type="journal article" date="2004" name="Mol. Endocrinol.">
        <title>Genomic organization of mouse orexin receptors: characterization of two novel tissue-specific splice variants.</title>
        <authorList>
            <person name="Chen J."/>
            <person name="Randeva H.S."/>
        </authorList>
    </citation>
    <scope>NUCLEOTIDE SEQUENCE [MRNA] (ISOFORMS 1 AND 2)</scope>
    <scope>TISSUE SPECIFICITY</scope>
    <source>
        <strain>BALB/cJ</strain>
        <tissue>Brain</tissue>
    </source>
</reference>
<reference key="2">
    <citation type="journal article" date="2005" name="Science">
        <title>The transcriptional landscape of the mammalian genome.</title>
        <authorList>
            <person name="Carninci P."/>
            <person name="Kasukawa T."/>
            <person name="Katayama S."/>
            <person name="Gough J."/>
            <person name="Frith M.C."/>
            <person name="Maeda N."/>
            <person name="Oyama R."/>
            <person name="Ravasi T."/>
            <person name="Lenhard B."/>
            <person name="Wells C."/>
            <person name="Kodzius R."/>
            <person name="Shimokawa K."/>
            <person name="Bajic V.B."/>
            <person name="Brenner S.E."/>
            <person name="Batalov S."/>
            <person name="Forrest A.R."/>
            <person name="Zavolan M."/>
            <person name="Davis M.J."/>
            <person name="Wilming L.G."/>
            <person name="Aidinis V."/>
            <person name="Allen J.E."/>
            <person name="Ambesi-Impiombato A."/>
            <person name="Apweiler R."/>
            <person name="Aturaliya R.N."/>
            <person name="Bailey T.L."/>
            <person name="Bansal M."/>
            <person name="Baxter L."/>
            <person name="Beisel K.W."/>
            <person name="Bersano T."/>
            <person name="Bono H."/>
            <person name="Chalk A.M."/>
            <person name="Chiu K.P."/>
            <person name="Choudhary V."/>
            <person name="Christoffels A."/>
            <person name="Clutterbuck D.R."/>
            <person name="Crowe M.L."/>
            <person name="Dalla E."/>
            <person name="Dalrymple B.P."/>
            <person name="de Bono B."/>
            <person name="Della Gatta G."/>
            <person name="di Bernardo D."/>
            <person name="Down T."/>
            <person name="Engstrom P."/>
            <person name="Fagiolini M."/>
            <person name="Faulkner G."/>
            <person name="Fletcher C.F."/>
            <person name="Fukushima T."/>
            <person name="Furuno M."/>
            <person name="Futaki S."/>
            <person name="Gariboldi M."/>
            <person name="Georgii-Hemming P."/>
            <person name="Gingeras T.R."/>
            <person name="Gojobori T."/>
            <person name="Green R.E."/>
            <person name="Gustincich S."/>
            <person name="Harbers M."/>
            <person name="Hayashi Y."/>
            <person name="Hensch T.K."/>
            <person name="Hirokawa N."/>
            <person name="Hill D."/>
            <person name="Huminiecki L."/>
            <person name="Iacono M."/>
            <person name="Ikeo K."/>
            <person name="Iwama A."/>
            <person name="Ishikawa T."/>
            <person name="Jakt M."/>
            <person name="Kanapin A."/>
            <person name="Katoh M."/>
            <person name="Kawasawa Y."/>
            <person name="Kelso J."/>
            <person name="Kitamura H."/>
            <person name="Kitano H."/>
            <person name="Kollias G."/>
            <person name="Krishnan S.P."/>
            <person name="Kruger A."/>
            <person name="Kummerfeld S.K."/>
            <person name="Kurochkin I.V."/>
            <person name="Lareau L.F."/>
            <person name="Lazarevic D."/>
            <person name="Lipovich L."/>
            <person name="Liu J."/>
            <person name="Liuni S."/>
            <person name="McWilliam S."/>
            <person name="Madan Babu M."/>
            <person name="Madera M."/>
            <person name="Marchionni L."/>
            <person name="Matsuda H."/>
            <person name="Matsuzawa S."/>
            <person name="Miki H."/>
            <person name="Mignone F."/>
            <person name="Miyake S."/>
            <person name="Morris K."/>
            <person name="Mottagui-Tabar S."/>
            <person name="Mulder N."/>
            <person name="Nakano N."/>
            <person name="Nakauchi H."/>
            <person name="Ng P."/>
            <person name="Nilsson R."/>
            <person name="Nishiguchi S."/>
            <person name="Nishikawa S."/>
            <person name="Nori F."/>
            <person name="Ohara O."/>
            <person name="Okazaki Y."/>
            <person name="Orlando V."/>
            <person name="Pang K.C."/>
            <person name="Pavan W.J."/>
            <person name="Pavesi G."/>
            <person name="Pesole G."/>
            <person name="Petrovsky N."/>
            <person name="Piazza S."/>
            <person name="Reed J."/>
            <person name="Reid J.F."/>
            <person name="Ring B.Z."/>
            <person name="Ringwald M."/>
            <person name="Rost B."/>
            <person name="Ruan Y."/>
            <person name="Salzberg S.L."/>
            <person name="Sandelin A."/>
            <person name="Schneider C."/>
            <person name="Schoenbach C."/>
            <person name="Sekiguchi K."/>
            <person name="Semple C.A."/>
            <person name="Seno S."/>
            <person name="Sessa L."/>
            <person name="Sheng Y."/>
            <person name="Shibata Y."/>
            <person name="Shimada H."/>
            <person name="Shimada K."/>
            <person name="Silva D."/>
            <person name="Sinclair B."/>
            <person name="Sperling S."/>
            <person name="Stupka E."/>
            <person name="Sugiura K."/>
            <person name="Sultana R."/>
            <person name="Takenaka Y."/>
            <person name="Taki K."/>
            <person name="Tammoja K."/>
            <person name="Tan S.L."/>
            <person name="Tang S."/>
            <person name="Taylor M.S."/>
            <person name="Tegner J."/>
            <person name="Teichmann S.A."/>
            <person name="Ueda H.R."/>
            <person name="van Nimwegen E."/>
            <person name="Verardo R."/>
            <person name="Wei C.L."/>
            <person name="Yagi K."/>
            <person name="Yamanishi H."/>
            <person name="Zabarovsky E."/>
            <person name="Zhu S."/>
            <person name="Zimmer A."/>
            <person name="Hide W."/>
            <person name="Bult C."/>
            <person name="Grimmond S.M."/>
            <person name="Teasdale R.D."/>
            <person name="Liu E.T."/>
            <person name="Brusic V."/>
            <person name="Quackenbush J."/>
            <person name="Wahlestedt C."/>
            <person name="Mattick J.S."/>
            <person name="Hume D.A."/>
            <person name="Kai C."/>
            <person name="Sasaki D."/>
            <person name="Tomaru Y."/>
            <person name="Fukuda S."/>
            <person name="Kanamori-Katayama M."/>
            <person name="Suzuki M."/>
            <person name="Aoki J."/>
            <person name="Arakawa T."/>
            <person name="Iida J."/>
            <person name="Imamura K."/>
            <person name="Itoh M."/>
            <person name="Kato T."/>
            <person name="Kawaji H."/>
            <person name="Kawagashira N."/>
            <person name="Kawashima T."/>
            <person name="Kojima M."/>
            <person name="Kondo S."/>
            <person name="Konno H."/>
            <person name="Nakano K."/>
            <person name="Ninomiya N."/>
            <person name="Nishio T."/>
            <person name="Okada M."/>
            <person name="Plessy C."/>
            <person name="Shibata K."/>
            <person name="Shiraki T."/>
            <person name="Suzuki S."/>
            <person name="Tagami M."/>
            <person name="Waki K."/>
            <person name="Watahiki A."/>
            <person name="Okamura-Oho Y."/>
            <person name="Suzuki H."/>
            <person name="Kawai J."/>
            <person name="Hayashizaki Y."/>
        </authorList>
    </citation>
    <scope>NUCLEOTIDE SEQUENCE [LARGE SCALE MRNA] (ISOFORM 1)</scope>
    <source>
        <strain>C57BL/6J</strain>
        <tissue>Cerebellum</tissue>
        <tissue>Hypothalamus</tissue>
    </source>
</reference>
<reference key="3">
    <citation type="submission" date="2001-06" db="EMBL/GenBank/DDBJ databases">
        <title>Cloning of mouse orexin receptors.</title>
        <authorList>
            <person name="Szendro P.I."/>
            <person name="Maevers K."/>
            <person name="Eichele G."/>
        </authorList>
    </citation>
    <scope>NUCLEOTIDE SEQUENCE [MRNA] OF 100-311 (ISOFORMS 1/2)</scope>
    <source>
        <strain>C57BL/6J</strain>
    </source>
</reference>
<reference key="4">
    <citation type="journal article" date="2001" name="Bioessays">
        <title>Hypocretin/orexin, sleep and narcolepsy.</title>
        <authorList>
            <person name="Hungs M."/>
            <person name="Mignot E."/>
        </authorList>
    </citation>
    <scope>REVIEW</scope>
</reference>
<reference key="5">
    <citation type="journal article" date="2001" name="Annu. Rev. Neurosci.">
        <title>To eat or to sleep? Orexin in the regulation of feeding and wakefulness.</title>
        <authorList>
            <person name="Willie J.T."/>
            <person name="Chemelli R.M."/>
            <person name="Sinton C.M."/>
            <person name="Yanagisawa M."/>
        </authorList>
    </citation>
    <scope>REVIEW</scope>
</reference>
<feature type="chain" id="PRO_0000069990" description="Orexin receptor type 2">
    <location>
        <begin position="1"/>
        <end position="460"/>
    </location>
</feature>
<feature type="topological domain" description="Extracellular" evidence="1">
    <location>
        <begin position="1"/>
        <end position="54"/>
    </location>
</feature>
<feature type="transmembrane region" description="Helical; Name=1" evidence="1">
    <location>
        <begin position="55"/>
        <end position="75"/>
    </location>
</feature>
<feature type="topological domain" description="Cytoplasmic" evidence="1">
    <location>
        <begin position="76"/>
        <end position="88"/>
    </location>
</feature>
<feature type="transmembrane region" description="Helical; Name=2" evidence="1">
    <location>
        <begin position="89"/>
        <end position="110"/>
    </location>
</feature>
<feature type="topological domain" description="Extracellular" evidence="1">
    <location>
        <begin position="111"/>
        <end position="127"/>
    </location>
</feature>
<feature type="transmembrane region" description="Helical; Name=3" evidence="1">
    <location>
        <begin position="128"/>
        <end position="150"/>
    </location>
</feature>
<feature type="topological domain" description="Cytoplasmic" evidence="1">
    <location>
        <begin position="151"/>
        <end position="170"/>
    </location>
</feature>
<feature type="transmembrane region" description="Helical; Name=4" evidence="1">
    <location>
        <begin position="171"/>
        <end position="191"/>
    </location>
</feature>
<feature type="topological domain" description="Extracellular" evidence="1">
    <location>
        <begin position="192"/>
        <end position="222"/>
    </location>
</feature>
<feature type="transmembrane region" description="Helical; Name=5" evidence="1">
    <location>
        <begin position="223"/>
        <end position="243"/>
    </location>
</feature>
<feature type="topological domain" description="Cytoplasmic" evidence="1">
    <location>
        <begin position="244"/>
        <end position="304"/>
    </location>
</feature>
<feature type="transmembrane region" description="Helical; Name=6" evidence="1">
    <location>
        <begin position="305"/>
        <end position="326"/>
    </location>
</feature>
<feature type="topological domain" description="Extracellular" evidence="1">
    <location>
        <begin position="327"/>
        <end position="342"/>
    </location>
</feature>
<feature type="transmembrane region" description="Helical; Name=7" evidence="1">
    <location>
        <begin position="343"/>
        <end position="366"/>
    </location>
</feature>
<feature type="topological domain" description="Cytoplasmic" evidence="1">
    <location>
        <begin position="367"/>
        <end position="460"/>
    </location>
</feature>
<feature type="region of interest" description="Required for response to orexin-A" evidence="1">
    <location>
        <begin position="33"/>
        <end position="49"/>
    </location>
</feature>
<feature type="site" description="Important for responses to orexin" evidence="1">
    <location>
        <position position="44"/>
    </location>
</feature>
<feature type="glycosylation site" description="N-linked (GlcNAc...) asparagine" evidence="2">
    <location>
        <position position="14"/>
    </location>
</feature>
<feature type="glycosylation site" description="N-linked (GlcNAc...) asparagine" evidence="2">
    <location>
        <position position="22"/>
    </location>
</feature>
<feature type="glycosylation site" description="N-linked (GlcNAc...) asparagine" evidence="2">
    <location>
        <position position="202"/>
    </location>
</feature>
<feature type="disulfide bond" evidence="1">
    <location>
        <begin position="127"/>
        <end position="210"/>
    </location>
</feature>
<feature type="splice variant" id="VSP_016466" description="In isoform 2." evidence="5">
    <location>
        <begin position="444"/>
        <end position="460"/>
    </location>
</feature>
<feature type="sequence conflict" description="In Ref. 3; AAK71327." evidence="6" ref="3">
    <original>A</original>
    <variation>T</variation>
    <location>
        <position position="201"/>
    </location>
</feature>
<feature type="sequence conflict" description="In Ref. 3; AAK71327." evidence="6" ref="3">
    <original>I</original>
    <variation>V</variation>
    <location>
        <position position="240"/>
    </location>
</feature>
<evidence type="ECO:0000250" key="1">
    <source>
        <dbReference type="UniProtKB" id="O43614"/>
    </source>
</evidence>
<evidence type="ECO:0000255" key="2"/>
<evidence type="ECO:0000255" key="3">
    <source>
        <dbReference type="PROSITE-ProRule" id="PRU00521"/>
    </source>
</evidence>
<evidence type="ECO:0000269" key="4">
    <source>
    </source>
</evidence>
<evidence type="ECO:0000303" key="5">
    <source>
    </source>
</evidence>
<evidence type="ECO:0000305" key="6"/>
<name>OX2R_MOUSE</name>
<proteinExistence type="evidence at transcript level"/>